<proteinExistence type="inferred from homology"/>
<feature type="chain" id="PRO_1000195678" description="Large ribosomal subunit protein uL11">
    <location>
        <begin position="1"/>
        <end position="141"/>
    </location>
</feature>
<keyword id="KW-0488">Methylation</keyword>
<keyword id="KW-1185">Reference proteome</keyword>
<keyword id="KW-0687">Ribonucleoprotein</keyword>
<keyword id="KW-0689">Ribosomal protein</keyword>
<keyword id="KW-0694">RNA-binding</keyword>
<keyword id="KW-0699">rRNA-binding</keyword>
<reference key="1">
    <citation type="submission" date="2008-04" db="EMBL/GenBank/DDBJ databases">
        <title>Complete sequence of chromosome of Natranaerobius thermophilus JW/NM-WN-LF.</title>
        <authorList>
            <consortium name="US DOE Joint Genome Institute"/>
            <person name="Copeland A."/>
            <person name="Lucas S."/>
            <person name="Lapidus A."/>
            <person name="Glavina del Rio T."/>
            <person name="Dalin E."/>
            <person name="Tice H."/>
            <person name="Bruce D."/>
            <person name="Goodwin L."/>
            <person name="Pitluck S."/>
            <person name="Chertkov O."/>
            <person name="Brettin T."/>
            <person name="Detter J.C."/>
            <person name="Han C."/>
            <person name="Kuske C.R."/>
            <person name="Schmutz J."/>
            <person name="Larimer F."/>
            <person name="Land M."/>
            <person name="Hauser L."/>
            <person name="Kyrpides N."/>
            <person name="Lykidis A."/>
            <person name="Mesbah N.M."/>
            <person name="Wiegel J."/>
        </authorList>
    </citation>
    <scope>NUCLEOTIDE SEQUENCE [LARGE SCALE GENOMIC DNA]</scope>
    <source>
        <strain>ATCC BAA-1301 / DSM 18059 / JW/NM-WN-LF</strain>
    </source>
</reference>
<organism>
    <name type="scientific">Natranaerobius thermophilus (strain ATCC BAA-1301 / DSM 18059 / JW/NM-WN-LF)</name>
    <dbReference type="NCBI Taxonomy" id="457570"/>
    <lineage>
        <taxon>Bacteria</taxon>
        <taxon>Bacillati</taxon>
        <taxon>Bacillota</taxon>
        <taxon>Clostridia</taxon>
        <taxon>Natranaerobiales</taxon>
        <taxon>Natranaerobiaceae</taxon>
        <taxon>Natranaerobius</taxon>
    </lineage>
</organism>
<comment type="function">
    <text evidence="1">Forms part of the ribosomal stalk which helps the ribosome interact with GTP-bound translation factors.</text>
</comment>
<comment type="subunit">
    <text evidence="1">Part of the ribosomal stalk of the 50S ribosomal subunit. Interacts with L10 and the large rRNA to form the base of the stalk. L10 forms an elongated spine to which L12 dimers bind in a sequential fashion forming a multimeric L10(L12)X complex.</text>
</comment>
<comment type="PTM">
    <text evidence="1">One or more lysine residues are methylated.</text>
</comment>
<comment type="similarity">
    <text evidence="1">Belongs to the universal ribosomal protein uL11 family.</text>
</comment>
<dbReference type="EMBL" id="CP001034">
    <property type="protein sequence ID" value="ACB83780.1"/>
    <property type="molecule type" value="Genomic_DNA"/>
</dbReference>
<dbReference type="RefSeq" id="WP_012446671.1">
    <property type="nucleotide sequence ID" value="NC_010718.1"/>
</dbReference>
<dbReference type="SMR" id="B2A4C6"/>
<dbReference type="FunCoup" id="B2A4C6">
    <property type="interactions" value="451"/>
</dbReference>
<dbReference type="STRING" id="457570.Nther_0181"/>
<dbReference type="KEGG" id="nth:Nther_0181"/>
<dbReference type="eggNOG" id="COG0080">
    <property type="taxonomic scope" value="Bacteria"/>
</dbReference>
<dbReference type="HOGENOM" id="CLU_074237_2_1_9"/>
<dbReference type="InParanoid" id="B2A4C6"/>
<dbReference type="OrthoDB" id="9802408at2"/>
<dbReference type="Proteomes" id="UP000001683">
    <property type="component" value="Chromosome"/>
</dbReference>
<dbReference type="GO" id="GO:0022625">
    <property type="term" value="C:cytosolic large ribosomal subunit"/>
    <property type="evidence" value="ECO:0007669"/>
    <property type="project" value="TreeGrafter"/>
</dbReference>
<dbReference type="GO" id="GO:0070180">
    <property type="term" value="F:large ribosomal subunit rRNA binding"/>
    <property type="evidence" value="ECO:0007669"/>
    <property type="project" value="UniProtKB-UniRule"/>
</dbReference>
<dbReference type="GO" id="GO:0003735">
    <property type="term" value="F:structural constituent of ribosome"/>
    <property type="evidence" value="ECO:0007669"/>
    <property type="project" value="InterPro"/>
</dbReference>
<dbReference type="GO" id="GO:0006412">
    <property type="term" value="P:translation"/>
    <property type="evidence" value="ECO:0007669"/>
    <property type="project" value="UniProtKB-UniRule"/>
</dbReference>
<dbReference type="CDD" id="cd00349">
    <property type="entry name" value="Ribosomal_L11"/>
    <property type="match status" value="1"/>
</dbReference>
<dbReference type="FunFam" id="1.10.10.250:FF:000001">
    <property type="entry name" value="50S ribosomal protein L11"/>
    <property type="match status" value="1"/>
</dbReference>
<dbReference type="FunFam" id="3.30.1550.10:FF:000001">
    <property type="entry name" value="50S ribosomal protein L11"/>
    <property type="match status" value="1"/>
</dbReference>
<dbReference type="Gene3D" id="1.10.10.250">
    <property type="entry name" value="Ribosomal protein L11, C-terminal domain"/>
    <property type="match status" value="1"/>
</dbReference>
<dbReference type="Gene3D" id="3.30.1550.10">
    <property type="entry name" value="Ribosomal protein L11/L12, N-terminal domain"/>
    <property type="match status" value="1"/>
</dbReference>
<dbReference type="HAMAP" id="MF_00736">
    <property type="entry name" value="Ribosomal_uL11"/>
    <property type="match status" value="1"/>
</dbReference>
<dbReference type="InterPro" id="IPR000911">
    <property type="entry name" value="Ribosomal_uL11"/>
</dbReference>
<dbReference type="InterPro" id="IPR006519">
    <property type="entry name" value="Ribosomal_uL11_bac-typ"/>
</dbReference>
<dbReference type="InterPro" id="IPR020783">
    <property type="entry name" value="Ribosomal_uL11_C"/>
</dbReference>
<dbReference type="InterPro" id="IPR036769">
    <property type="entry name" value="Ribosomal_uL11_C_sf"/>
</dbReference>
<dbReference type="InterPro" id="IPR020785">
    <property type="entry name" value="Ribosomal_uL11_CS"/>
</dbReference>
<dbReference type="InterPro" id="IPR020784">
    <property type="entry name" value="Ribosomal_uL11_N"/>
</dbReference>
<dbReference type="InterPro" id="IPR036796">
    <property type="entry name" value="Ribosomal_uL11_N_sf"/>
</dbReference>
<dbReference type="NCBIfam" id="TIGR01632">
    <property type="entry name" value="L11_bact"/>
    <property type="match status" value="1"/>
</dbReference>
<dbReference type="PANTHER" id="PTHR11661">
    <property type="entry name" value="60S RIBOSOMAL PROTEIN L12"/>
    <property type="match status" value="1"/>
</dbReference>
<dbReference type="PANTHER" id="PTHR11661:SF1">
    <property type="entry name" value="LARGE RIBOSOMAL SUBUNIT PROTEIN UL11M"/>
    <property type="match status" value="1"/>
</dbReference>
<dbReference type="Pfam" id="PF00298">
    <property type="entry name" value="Ribosomal_L11"/>
    <property type="match status" value="1"/>
</dbReference>
<dbReference type="Pfam" id="PF03946">
    <property type="entry name" value="Ribosomal_L11_N"/>
    <property type="match status" value="1"/>
</dbReference>
<dbReference type="SMART" id="SM00649">
    <property type="entry name" value="RL11"/>
    <property type="match status" value="1"/>
</dbReference>
<dbReference type="SUPFAM" id="SSF54747">
    <property type="entry name" value="Ribosomal L11/L12e N-terminal domain"/>
    <property type="match status" value="1"/>
</dbReference>
<dbReference type="SUPFAM" id="SSF46906">
    <property type="entry name" value="Ribosomal protein L11, C-terminal domain"/>
    <property type="match status" value="1"/>
</dbReference>
<dbReference type="PROSITE" id="PS00359">
    <property type="entry name" value="RIBOSOMAL_L11"/>
    <property type="match status" value="1"/>
</dbReference>
<protein>
    <recommendedName>
        <fullName evidence="1">Large ribosomal subunit protein uL11</fullName>
    </recommendedName>
    <alternativeName>
        <fullName evidence="2">50S ribosomal protein L11</fullName>
    </alternativeName>
</protein>
<evidence type="ECO:0000255" key="1">
    <source>
        <dbReference type="HAMAP-Rule" id="MF_00736"/>
    </source>
</evidence>
<evidence type="ECO:0000305" key="2"/>
<sequence>MAKKVAQVIKLQIPAGKATPAPPVGPALGQHGVNIMSFCKEFNEQTANQEGMLIPVEITVYEDRSFTFITKTPPAAVLLKKAAGIDKASGEPNKNKVATVGKDKVKEIAELKMQDMNASDLDAAMKMVEGTARSMGIIVEG</sequence>
<gene>
    <name evidence="1" type="primary">rplK</name>
    <name type="ordered locus">Nther_0181</name>
</gene>
<accession>B2A4C6</accession>
<name>RL11_NATTJ</name>